<gene>
    <name type="ordered locus">Os02g0220500</name>
    <name type="ordered locus">LOC_Os02g12800</name>
    <name type="ORF">B1131G07.11</name>
</gene>
<keyword id="KW-0025">Alternative splicing</keyword>
<keyword id="KW-0251">Elongation factor</keyword>
<keyword id="KW-0648">Protein biosynthesis</keyword>
<keyword id="KW-1185">Reference proteome</keyword>
<dbReference type="EMBL" id="AP005797">
    <property type="protein sequence ID" value="BAD17614.1"/>
    <property type="molecule type" value="Genomic_DNA"/>
</dbReference>
<dbReference type="EMBL" id="AP014958">
    <property type="protein sequence ID" value="BAS77698.1"/>
    <property type="molecule type" value="Genomic_DNA"/>
</dbReference>
<dbReference type="EMBL" id="AK103901">
    <property type="status" value="NOT_ANNOTATED_CDS"/>
    <property type="molecule type" value="mRNA"/>
</dbReference>
<dbReference type="EMBL" id="AY224455">
    <property type="protein sequence ID" value="AAO72574.1"/>
    <property type="molecule type" value="mRNA"/>
</dbReference>
<dbReference type="RefSeq" id="XP_015625858.1">
    <property type="nucleotide sequence ID" value="XM_015770372.1"/>
</dbReference>
<dbReference type="SMR" id="Q6YW46"/>
<dbReference type="FunCoup" id="Q6YW46">
    <property type="interactions" value="2711"/>
</dbReference>
<dbReference type="IntAct" id="Q6YW46">
    <property type="interactions" value="3"/>
</dbReference>
<dbReference type="STRING" id="39947.Q6YW46"/>
<dbReference type="PaxDb" id="39947-Q6YW46"/>
<dbReference type="eggNOG" id="KOG0867">
    <property type="taxonomic scope" value="Eukaryota"/>
</dbReference>
<dbReference type="eggNOG" id="KOG1627">
    <property type="taxonomic scope" value="Eukaryota"/>
</dbReference>
<dbReference type="InParanoid" id="Q6YW46"/>
<dbReference type="OMA" id="FGHFPIN"/>
<dbReference type="OrthoDB" id="249703at2759"/>
<dbReference type="Proteomes" id="UP000000763">
    <property type="component" value="Chromosome 2"/>
</dbReference>
<dbReference type="Proteomes" id="UP000059680">
    <property type="component" value="Chromosome 2"/>
</dbReference>
<dbReference type="GO" id="GO:0004364">
    <property type="term" value="F:glutathione transferase activity"/>
    <property type="evidence" value="ECO:0007669"/>
    <property type="project" value="InterPro"/>
</dbReference>
<dbReference type="GO" id="GO:0003746">
    <property type="term" value="F:translation elongation factor activity"/>
    <property type="evidence" value="ECO:0007669"/>
    <property type="project" value="UniProtKB-KW"/>
</dbReference>
<dbReference type="CDD" id="cd03181">
    <property type="entry name" value="GST_C_EF1Bgamma_like"/>
    <property type="match status" value="1"/>
</dbReference>
<dbReference type="CDD" id="cd03044">
    <property type="entry name" value="GST_N_EF1Bgamma"/>
    <property type="match status" value="1"/>
</dbReference>
<dbReference type="FunFam" id="1.20.1050.10:FF:000006">
    <property type="entry name" value="Elongation factor 1 gamma"/>
    <property type="match status" value="1"/>
</dbReference>
<dbReference type="FunFam" id="3.30.70.1010:FF:000001">
    <property type="entry name" value="Elongation factor 1-gamma 1"/>
    <property type="match status" value="1"/>
</dbReference>
<dbReference type="FunFam" id="3.40.30.10:FF:000148">
    <property type="entry name" value="Elongation factor 1B gamma"/>
    <property type="match status" value="1"/>
</dbReference>
<dbReference type="Gene3D" id="1.20.1050.10">
    <property type="match status" value="1"/>
</dbReference>
<dbReference type="Gene3D" id="3.40.30.10">
    <property type="entry name" value="Glutaredoxin"/>
    <property type="match status" value="1"/>
</dbReference>
<dbReference type="Gene3D" id="3.30.70.1010">
    <property type="entry name" value="Translation elongation factor EF1B, gamma chain, conserved domain"/>
    <property type="match status" value="1"/>
</dbReference>
<dbReference type="InterPro" id="IPR044628">
    <property type="entry name" value="EF-1-gamma_plant"/>
</dbReference>
<dbReference type="InterPro" id="IPR001662">
    <property type="entry name" value="EF1B_G_C"/>
</dbReference>
<dbReference type="InterPro" id="IPR036433">
    <property type="entry name" value="EF1B_G_C_sf"/>
</dbReference>
<dbReference type="InterPro" id="IPR010987">
    <property type="entry name" value="Glutathione-S-Trfase_C-like"/>
</dbReference>
<dbReference type="InterPro" id="IPR036282">
    <property type="entry name" value="Glutathione-S-Trfase_C_sf"/>
</dbReference>
<dbReference type="InterPro" id="IPR040079">
    <property type="entry name" value="Glutathione_S-Trfase"/>
</dbReference>
<dbReference type="InterPro" id="IPR004045">
    <property type="entry name" value="Glutathione_S-Trfase_N"/>
</dbReference>
<dbReference type="InterPro" id="IPR004046">
    <property type="entry name" value="GST_C"/>
</dbReference>
<dbReference type="InterPro" id="IPR036249">
    <property type="entry name" value="Thioredoxin-like_sf"/>
</dbReference>
<dbReference type="PANTHER" id="PTHR44372">
    <property type="entry name" value="ELONGATION FACTOR 1-GAMMA 1-RELATED"/>
    <property type="match status" value="1"/>
</dbReference>
<dbReference type="PANTHER" id="PTHR44372:SF1">
    <property type="entry name" value="ELONGATION FACTOR 1-GAMMA 3"/>
    <property type="match status" value="1"/>
</dbReference>
<dbReference type="Pfam" id="PF00647">
    <property type="entry name" value="EF1G"/>
    <property type="match status" value="1"/>
</dbReference>
<dbReference type="Pfam" id="PF00043">
    <property type="entry name" value="GST_C"/>
    <property type="match status" value="1"/>
</dbReference>
<dbReference type="Pfam" id="PF02798">
    <property type="entry name" value="GST_N"/>
    <property type="match status" value="1"/>
</dbReference>
<dbReference type="SFLD" id="SFLDS00019">
    <property type="entry name" value="Glutathione_Transferase_(cytos"/>
    <property type="match status" value="1"/>
</dbReference>
<dbReference type="SFLD" id="SFLDG00358">
    <property type="entry name" value="Main_(cytGST)"/>
    <property type="match status" value="1"/>
</dbReference>
<dbReference type="SMART" id="SM01183">
    <property type="entry name" value="EF1G"/>
    <property type="match status" value="1"/>
</dbReference>
<dbReference type="SUPFAM" id="SSF89942">
    <property type="entry name" value="eEF1-gamma domain"/>
    <property type="match status" value="1"/>
</dbReference>
<dbReference type="SUPFAM" id="SSF47616">
    <property type="entry name" value="GST C-terminal domain-like"/>
    <property type="match status" value="1"/>
</dbReference>
<dbReference type="SUPFAM" id="SSF52833">
    <property type="entry name" value="Thioredoxin-like"/>
    <property type="match status" value="1"/>
</dbReference>
<dbReference type="PROSITE" id="PS50040">
    <property type="entry name" value="EF1G_C"/>
    <property type="match status" value="1"/>
</dbReference>
<dbReference type="PROSITE" id="PS50405">
    <property type="entry name" value="GST_CTER"/>
    <property type="match status" value="1"/>
</dbReference>
<dbReference type="PROSITE" id="PS50404">
    <property type="entry name" value="GST_NTER"/>
    <property type="match status" value="1"/>
</dbReference>
<organism>
    <name type="scientific">Oryza sativa subsp. japonica</name>
    <name type="common">Rice</name>
    <dbReference type="NCBI Taxonomy" id="39947"/>
    <lineage>
        <taxon>Eukaryota</taxon>
        <taxon>Viridiplantae</taxon>
        <taxon>Streptophyta</taxon>
        <taxon>Embryophyta</taxon>
        <taxon>Tracheophyta</taxon>
        <taxon>Spermatophyta</taxon>
        <taxon>Magnoliopsida</taxon>
        <taxon>Liliopsida</taxon>
        <taxon>Poales</taxon>
        <taxon>Poaceae</taxon>
        <taxon>BOP clade</taxon>
        <taxon>Oryzoideae</taxon>
        <taxon>Oryzeae</taxon>
        <taxon>Oryzinae</taxon>
        <taxon>Oryza</taxon>
        <taxon>Oryza sativa</taxon>
    </lineage>
</organism>
<comment type="function">
    <text evidence="1">Probably plays a role in anchoring the complex to other cellular components.</text>
</comment>
<comment type="subunit">
    <text>EF-1 is composed of four subunits: alpha, beta, delta, and gamma.</text>
</comment>
<comment type="alternative products">
    <event type="alternative splicing"/>
    <isoform>
        <id>Q6YW46-1</id>
        <name>1</name>
        <sequence type="displayed"/>
    </isoform>
    <isoform>
        <id>Q6YW46-2</id>
        <name>2</name>
        <sequence type="described" ref="VSP_017654"/>
    </isoform>
</comment>
<evidence type="ECO:0000250" key="1"/>
<evidence type="ECO:0000255" key="2">
    <source>
        <dbReference type="PROSITE-ProRule" id="PRU00519"/>
    </source>
</evidence>
<evidence type="ECO:0000256" key="3">
    <source>
        <dbReference type="SAM" id="MobiDB-lite"/>
    </source>
</evidence>
<evidence type="ECO:0000303" key="4">
    <source>
    </source>
</evidence>
<protein>
    <recommendedName>
        <fullName>Elongation factor 1-gamma 2</fullName>
        <shortName>EF-1-gamma 2</shortName>
    </recommendedName>
    <alternativeName>
        <fullName>eEF-1B gamma 2</fullName>
    </alternativeName>
</protein>
<reference key="1">
    <citation type="journal article" date="2005" name="Nature">
        <title>The map-based sequence of the rice genome.</title>
        <authorList>
            <consortium name="International rice genome sequencing project (IRGSP)"/>
        </authorList>
    </citation>
    <scope>NUCLEOTIDE SEQUENCE [LARGE SCALE GENOMIC DNA]</scope>
    <source>
        <strain>cv. Nipponbare</strain>
    </source>
</reference>
<reference key="2">
    <citation type="journal article" date="2013" name="Rice">
        <title>Improvement of the Oryza sativa Nipponbare reference genome using next generation sequence and optical map data.</title>
        <authorList>
            <person name="Kawahara Y."/>
            <person name="de la Bastide M."/>
            <person name="Hamilton J.P."/>
            <person name="Kanamori H."/>
            <person name="McCombie W.R."/>
            <person name="Ouyang S."/>
            <person name="Schwartz D.C."/>
            <person name="Tanaka T."/>
            <person name="Wu J."/>
            <person name="Zhou S."/>
            <person name="Childs K.L."/>
            <person name="Davidson R.M."/>
            <person name="Lin H."/>
            <person name="Quesada-Ocampo L."/>
            <person name="Vaillancourt B."/>
            <person name="Sakai H."/>
            <person name="Lee S.S."/>
            <person name="Kim J."/>
            <person name="Numa H."/>
            <person name="Itoh T."/>
            <person name="Buell C.R."/>
            <person name="Matsumoto T."/>
        </authorList>
    </citation>
    <scope>GENOME REANNOTATION</scope>
    <source>
        <strain>cv. Nipponbare</strain>
    </source>
</reference>
<reference key="3">
    <citation type="journal article" date="2003" name="Science">
        <title>Collection, mapping, and annotation of over 28,000 cDNA clones from japonica rice.</title>
        <authorList>
            <consortium name="The rice full-length cDNA consortium"/>
        </authorList>
    </citation>
    <scope>NUCLEOTIDE SEQUENCE [LARGE SCALE MRNA] (ISOFORM 2)</scope>
    <source>
        <strain>cv. Nipponbare</strain>
    </source>
</reference>
<reference key="4">
    <citation type="journal article" date="2003" name="Proc. Natl. Acad. Sci. U.S.A.">
        <title>A network of rice genes associated with stress response and seed development.</title>
        <authorList>
            <person name="Cooper B."/>
            <person name="Clarke J.D."/>
            <person name="Budworth P."/>
            <person name="Kreps J."/>
            <person name="Hutchison D."/>
            <person name="Park S."/>
            <person name="Guimil S."/>
            <person name="Dunn M."/>
            <person name="Luginbuehl P."/>
            <person name="Ellero C."/>
            <person name="Goff S.A."/>
            <person name="Glazebrook J."/>
        </authorList>
    </citation>
    <scope>NUCLEOTIDE SEQUENCE [MRNA] OF 10-418 (ISOFORM 1)</scope>
    <source>
        <strain>cv. Nipponbare</strain>
    </source>
</reference>
<name>EF1G2_ORYSJ</name>
<proteinExistence type="evidence at transcript level"/>
<feature type="chain" id="PRO_0000228123" description="Elongation factor 1-gamma 2">
    <location>
        <begin position="1"/>
        <end position="418"/>
    </location>
</feature>
<feature type="domain" description="GST N-terminal">
    <location>
        <begin position="1"/>
        <end position="82"/>
    </location>
</feature>
<feature type="domain" description="GST C-terminal">
    <location>
        <begin position="87"/>
        <end position="215"/>
    </location>
</feature>
<feature type="domain" description="EF-1-gamma C-terminal" evidence="2">
    <location>
        <begin position="258"/>
        <end position="418"/>
    </location>
</feature>
<feature type="region of interest" description="Disordered" evidence="3">
    <location>
        <begin position="210"/>
        <end position="265"/>
    </location>
</feature>
<feature type="compositionally biased region" description="Basic and acidic residues" evidence="3">
    <location>
        <begin position="221"/>
        <end position="246"/>
    </location>
</feature>
<feature type="splice variant" id="VSP_017654" description="In isoform 2." evidence="4">
    <location>
        <begin position="237"/>
        <end position="240"/>
    </location>
</feature>
<accession>Q6YW46</accession>
<accession>Q84PA8</accession>
<sequence length="418" mass="47356">MALVLHAGSGNKNAFKALIAAEYSGVKVELVKNFQMGVSNKTPEFLKMNPIGKIPVLETPDGPVFESNAIARYVTRSKADNPLYGSSLIEYAHIEQWNDFSATEVDANIGKWLYPRLGIAPYVAVSEEAAIAALKRSLGALNTHLASNTYLVGHSVTLADIVMTCNLYMGFARIMTKSFTSEFPHVERYFWTMVNQPNFKKVLGDVKQAESVPPVQKKAPPPKEQKPKEAKKEAPKEAPKPKAVEKPEEEEEAPKPKPKNPLDLLPPSKMILDEWKRLYSNTKTNFREVAIKGFWDMYDPEGYSLWFCDYKYNDENTVSFVTMNKVGGFLQRMDLCRKYAFGKMLVIGSEPPFKVKGLWLFRGPEIPKFVMDEVYDMELYEWTKVDISDEAQKERVSAMIEDLEPFEGESLLDAKCFK</sequence>